<proteinExistence type="evidence at protein level"/>
<organism>
    <name type="scientific">Acinetobacter baumannii (strain AB0057)</name>
    <dbReference type="NCBI Taxonomy" id="480119"/>
    <lineage>
        <taxon>Bacteria</taxon>
        <taxon>Pseudomonadati</taxon>
        <taxon>Pseudomonadota</taxon>
        <taxon>Gammaproteobacteria</taxon>
        <taxon>Moraxellales</taxon>
        <taxon>Moraxellaceae</taxon>
        <taxon>Acinetobacter</taxon>
        <taxon>Acinetobacter calcoaceticus/baumannii complex</taxon>
    </lineage>
</organism>
<sequence>MARFYRRRKFCRFTAENVAYIDYKDIDTLKQYITENGKIVPSRITGTKARYQRQLALAIKQARYLSLIPYTDNHK</sequence>
<comment type="function">
    <text evidence="1">Binds as a heterodimer with protein bS6 to the central domain of the 16S rRNA, where it helps stabilize the platform of the 30S subunit.</text>
</comment>
<comment type="subunit">
    <text evidence="1">Part of the 30S ribosomal subunit. Forms a tight heterodimer with protein bS6.</text>
</comment>
<comment type="similarity">
    <text evidence="1">Belongs to the bacterial ribosomal protein bS18 family.</text>
</comment>
<evidence type="ECO:0000255" key="1">
    <source>
        <dbReference type="HAMAP-Rule" id="MF_00270"/>
    </source>
</evidence>
<evidence type="ECO:0000305" key="2"/>
<evidence type="ECO:0007829" key="3">
    <source>
        <dbReference type="PDB" id="7M4U"/>
    </source>
</evidence>
<feature type="chain" id="PRO_1000196508" description="Small ribosomal subunit protein bS18">
    <location>
        <begin position="1"/>
        <end position="75"/>
    </location>
</feature>
<feature type="helix" evidence="3">
    <location>
        <begin position="26"/>
        <end position="30"/>
    </location>
</feature>
<feature type="helix" evidence="3">
    <location>
        <begin position="42"/>
        <end position="45"/>
    </location>
</feature>
<feature type="helix" evidence="3">
    <location>
        <begin position="49"/>
        <end position="64"/>
    </location>
</feature>
<accession>B7IBC2</accession>
<gene>
    <name evidence="1" type="primary">rpsR</name>
    <name type="ordered locus">AB57_2510</name>
</gene>
<name>RS18_ACIB5</name>
<keyword id="KW-0002">3D-structure</keyword>
<keyword id="KW-0687">Ribonucleoprotein</keyword>
<keyword id="KW-0689">Ribosomal protein</keyword>
<keyword id="KW-0694">RNA-binding</keyword>
<keyword id="KW-0699">rRNA-binding</keyword>
<dbReference type="EMBL" id="CP001182">
    <property type="protein sequence ID" value="ACJ42619.1"/>
    <property type="molecule type" value="Genomic_DNA"/>
</dbReference>
<dbReference type="RefSeq" id="WP_000090661.1">
    <property type="nucleotide sequence ID" value="NC_011586.2"/>
</dbReference>
<dbReference type="PDB" id="7M4U">
    <property type="method" value="EM"/>
    <property type="resolution" value="2.71 A"/>
    <property type="chains" value="r=1-75"/>
</dbReference>
<dbReference type="PDBsum" id="7M4U"/>
<dbReference type="SMR" id="B7IBC2"/>
<dbReference type="IntAct" id="B7IBC2">
    <property type="interactions" value="1"/>
</dbReference>
<dbReference type="GeneID" id="92894414"/>
<dbReference type="KEGG" id="abn:AB57_2510"/>
<dbReference type="HOGENOM" id="CLU_148710_2_3_6"/>
<dbReference type="Proteomes" id="UP000007094">
    <property type="component" value="Chromosome"/>
</dbReference>
<dbReference type="GO" id="GO:0022627">
    <property type="term" value="C:cytosolic small ribosomal subunit"/>
    <property type="evidence" value="ECO:0007669"/>
    <property type="project" value="TreeGrafter"/>
</dbReference>
<dbReference type="GO" id="GO:0070181">
    <property type="term" value="F:small ribosomal subunit rRNA binding"/>
    <property type="evidence" value="ECO:0007669"/>
    <property type="project" value="TreeGrafter"/>
</dbReference>
<dbReference type="GO" id="GO:0003735">
    <property type="term" value="F:structural constituent of ribosome"/>
    <property type="evidence" value="ECO:0007669"/>
    <property type="project" value="InterPro"/>
</dbReference>
<dbReference type="GO" id="GO:0006412">
    <property type="term" value="P:translation"/>
    <property type="evidence" value="ECO:0007669"/>
    <property type="project" value="UniProtKB-UniRule"/>
</dbReference>
<dbReference type="FunFam" id="4.10.640.10:FF:000001">
    <property type="entry name" value="30S ribosomal protein S18"/>
    <property type="match status" value="1"/>
</dbReference>
<dbReference type="Gene3D" id="4.10.640.10">
    <property type="entry name" value="Ribosomal protein S18"/>
    <property type="match status" value="1"/>
</dbReference>
<dbReference type="HAMAP" id="MF_00270">
    <property type="entry name" value="Ribosomal_bS18"/>
    <property type="match status" value="1"/>
</dbReference>
<dbReference type="InterPro" id="IPR001648">
    <property type="entry name" value="Ribosomal_bS18"/>
</dbReference>
<dbReference type="InterPro" id="IPR018275">
    <property type="entry name" value="Ribosomal_bS18_CS"/>
</dbReference>
<dbReference type="InterPro" id="IPR036870">
    <property type="entry name" value="Ribosomal_bS18_sf"/>
</dbReference>
<dbReference type="NCBIfam" id="TIGR00165">
    <property type="entry name" value="S18"/>
    <property type="match status" value="1"/>
</dbReference>
<dbReference type="PANTHER" id="PTHR13479">
    <property type="entry name" value="30S RIBOSOMAL PROTEIN S18"/>
    <property type="match status" value="1"/>
</dbReference>
<dbReference type="PANTHER" id="PTHR13479:SF40">
    <property type="entry name" value="SMALL RIBOSOMAL SUBUNIT PROTEIN BS18M"/>
    <property type="match status" value="1"/>
</dbReference>
<dbReference type="Pfam" id="PF01084">
    <property type="entry name" value="Ribosomal_S18"/>
    <property type="match status" value="1"/>
</dbReference>
<dbReference type="PRINTS" id="PR00974">
    <property type="entry name" value="RIBOSOMALS18"/>
</dbReference>
<dbReference type="SUPFAM" id="SSF46911">
    <property type="entry name" value="Ribosomal protein S18"/>
    <property type="match status" value="1"/>
</dbReference>
<dbReference type="PROSITE" id="PS00057">
    <property type="entry name" value="RIBOSOMAL_S18"/>
    <property type="match status" value="1"/>
</dbReference>
<protein>
    <recommendedName>
        <fullName evidence="1">Small ribosomal subunit protein bS18</fullName>
    </recommendedName>
    <alternativeName>
        <fullName evidence="2">30S ribosomal protein S18</fullName>
    </alternativeName>
</protein>
<reference key="1">
    <citation type="journal article" date="2008" name="J. Bacteriol.">
        <title>Comparative genome sequence analysis of multidrug-resistant Acinetobacter baumannii.</title>
        <authorList>
            <person name="Adams M.D."/>
            <person name="Goglin K."/>
            <person name="Molyneaux N."/>
            <person name="Hujer K.M."/>
            <person name="Lavender H."/>
            <person name="Jamison J.J."/>
            <person name="MacDonald I.J."/>
            <person name="Martin K.M."/>
            <person name="Russo T."/>
            <person name="Campagnari A.A."/>
            <person name="Hujer A.M."/>
            <person name="Bonomo R.A."/>
            <person name="Gill S.R."/>
        </authorList>
    </citation>
    <scope>NUCLEOTIDE SEQUENCE [LARGE SCALE GENOMIC DNA]</scope>
    <source>
        <strain>AB0057</strain>
    </source>
</reference>